<comment type="subcellular location">
    <subcellularLocation>
        <location evidence="2">Membrane</location>
        <topology evidence="2">Single-pass membrane protein</topology>
    </subcellularLocation>
</comment>
<keyword id="KW-0393">Immunoglobulin domain</keyword>
<keyword id="KW-0472">Membrane</keyword>
<keyword id="KW-0675">Receptor</keyword>
<keyword id="KW-1185">Reference proteome</keyword>
<keyword id="KW-0812">Transmembrane</keyword>
<keyword id="KW-1133">Transmembrane helix</keyword>
<evidence type="ECO:0000255" key="1"/>
<evidence type="ECO:0000305" key="2"/>
<protein>
    <recommendedName>
        <fullName>T-cell receptor gamma chain C region C7.5</fullName>
    </recommendedName>
</protein>
<name>TCC2_MOUSE</name>
<reference key="1">
    <citation type="journal article" date="1985" name="Cell">
        <title>Structure, organization, and somatic rearrangement of T cell gamma genes.</title>
        <authorList>
            <person name="Hayday A.C."/>
            <person name="Saito H."/>
            <person name="Gillies S.D."/>
            <person name="Kranz D.M."/>
            <person name="Tanigawa G."/>
            <person name="Eisen H.N."/>
            <person name="Tonegawa S."/>
        </authorList>
    </citation>
    <scope>NUCLEOTIDE SEQUENCE</scope>
</reference>
<sequence>DKKLDADISPKPTIFLPSVAETNLHKTGTYLCVLEKFFPDVIRVYWKEKKGNTILDSQEGDMLKTNDTYMKFSWLTVPERSMGKEHRCIVKHENNKGGADQEIFFPTIKKVAVSTKPTTCWQDKNDVLQLQFTITSAYYTYLLLLLKSVIYLAIISFSLLRRTSVCCNEKKS</sequence>
<feature type="chain" id="PRO_0000184532" description="T-cell receptor gamma chain C region C7.5">
    <location>
        <begin position="1" status="less than"/>
        <end position="172"/>
    </location>
</feature>
<feature type="transmembrane region" description="Helical" evidence="1">
    <location>
        <begin position="141"/>
        <end position="160"/>
    </location>
</feature>
<feature type="topological domain" description="Cytoplasmic" evidence="1">
    <location>
        <begin position="161"/>
        <end position="172"/>
    </location>
</feature>
<feature type="region of interest" description="C region">
    <location>
        <begin position="1"/>
        <end position="140"/>
    </location>
</feature>
<feature type="non-terminal residue">
    <location>
        <position position="1"/>
    </location>
</feature>
<accession>P03985</accession>
<organism>
    <name type="scientific">Mus musculus</name>
    <name type="common">Mouse</name>
    <dbReference type="NCBI Taxonomy" id="10090"/>
    <lineage>
        <taxon>Eukaryota</taxon>
        <taxon>Metazoa</taxon>
        <taxon>Chordata</taxon>
        <taxon>Craniata</taxon>
        <taxon>Vertebrata</taxon>
        <taxon>Euteleostomi</taxon>
        <taxon>Mammalia</taxon>
        <taxon>Eutheria</taxon>
        <taxon>Euarchontoglires</taxon>
        <taxon>Glires</taxon>
        <taxon>Rodentia</taxon>
        <taxon>Myomorpha</taxon>
        <taxon>Muroidea</taxon>
        <taxon>Muridae</taxon>
        <taxon>Murinae</taxon>
        <taxon>Mus</taxon>
        <taxon>Mus</taxon>
    </lineage>
</organism>
<proteinExistence type="predicted"/>
<dbReference type="PIR" id="A02139">
    <property type="entry name" value="RWMSC7"/>
</dbReference>
<dbReference type="SMR" id="P03985"/>
<dbReference type="FunCoup" id="P03985">
    <property type="interactions" value="193"/>
</dbReference>
<dbReference type="STRING" id="10090.ENSMUSP00000132340"/>
<dbReference type="PaxDb" id="10090-ENSMUSP00000132340"/>
<dbReference type="eggNOG" id="ENOG502SQHK">
    <property type="taxonomic scope" value="Eukaryota"/>
</dbReference>
<dbReference type="InParanoid" id="P03985"/>
<dbReference type="Proteomes" id="UP000000589">
    <property type="component" value="Unplaced"/>
</dbReference>
<dbReference type="RNAct" id="P03985">
    <property type="molecule type" value="protein"/>
</dbReference>
<dbReference type="GO" id="GO:0009897">
    <property type="term" value="C:external side of plasma membrane"/>
    <property type="evidence" value="ECO:0000318"/>
    <property type="project" value="GO_Central"/>
</dbReference>
<dbReference type="FunFam" id="2.60.40.10:FF:001083">
    <property type="entry name" value="T cell receptor gamma constant 2"/>
    <property type="match status" value="1"/>
</dbReference>
<dbReference type="Gene3D" id="2.60.40.10">
    <property type="entry name" value="Immunoglobulins"/>
    <property type="match status" value="1"/>
</dbReference>
<dbReference type="InterPro" id="IPR007110">
    <property type="entry name" value="Ig-like_dom"/>
</dbReference>
<dbReference type="InterPro" id="IPR036179">
    <property type="entry name" value="Ig-like_dom_sf"/>
</dbReference>
<dbReference type="InterPro" id="IPR013783">
    <property type="entry name" value="Ig-like_fold"/>
</dbReference>
<dbReference type="InterPro" id="IPR003597">
    <property type="entry name" value="Ig_C1-set"/>
</dbReference>
<dbReference type="InterPro" id="IPR051117">
    <property type="entry name" value="TRG_var/const_region"/>
</dbReference>
<dbReference type="PANTHER" id="PTHR19256:SF65">
    <property type="entry name" value="T CELL RECEPTOR GAMMA CONSTANT 1-RELATED"/>
    <property type="match status" value="1"/>
</dbReference>
<dbReference type="PANTHER" id="PTHR19256">
    <property type="entry name" value="T-CELL RECEPTOR GAMMA CHAIN"/>
    <property type="match status" value="1"/>
</dbReference>
<dbReference type="Pfam" id="PF07654">
    <property type="entry name" value="C1-set"/>
    <property type="match status" value="1"/>
</dbReference>
<dbReference type="SMART" id="SM00407">
    <property type="entry name" value="IGc1"/>
    <property type="match status" value="1"/>
</dbReference>
<dbReference type="SUPFAM" id="SSF48726">
    <property type="entry name" value="Immunoglobulin"/>
    <property type="match status" value="1"/>
</dbReference>
<dbReference type="PROSITE" id="PS50835">
    <property type="entry name" value="IG_LIKE"/>
    <property type="match status" value="1"/>
</dbReference>